<evidence type="ECO:0000255" key="1">
    <source>
        <dbReference type="PROSITE-ProRule" id="PRU00648"/>
    </source>
</evidence>
<evidence type="ECO:0000255" key="2">
    <source>
        <dbReference type="PROSITE-ProRule" id="PRU01097"/>
    </source>
</evidence>
<evidence type="ECO:0000255" key="3">
    <source>
        <dbReference type="PROSITE-ProRule" id="PRU10062"/>
    </source>
</evidence>
<evidence type="ECO:0000255" key="4">
    <source>
        <dbReference type="PROSITE-ProRule" id="PRU10063"/>
    </source>
</evidence>
<evidence type="ECO:0000256" key="5">
    <source>
        <dbReference type="SAM" id="MobiDB-lite"/>
    </source>
</evidence>
<evidence type="ECO:0000269" key="6">
    <source>
    </source>
</evidence>
<evidence type="ECO:0000269" key="7">
    <source>
    </source>
</evidence>
<evidence type="ECO:0000305" key="8"/>
<dbReference type="EC" id="3.2.1.8"/>
<dbReference type="EMBL" id="M64553">
    <property type="protein sequence ID" value="AAA26836.1"/>
    <property type="molecule type" value="Genomic_DNA"/>
</dbReference>
<dbReference type="PIR" id="JS0591">
    <property type="entry name" value="JS0591"/>
</dbReference>
<dbReference type="SMR" id="P26220"/>
<dbReference type="CAZy" id="GH11">
    <property type="family name" value="Glycoside Hydrolase Family 11"/>
</dbReference>
<dbReference type="UniPathway" id="UPA00114"/>
<dbReference type="GO" id="GO:0005576">
    <property type="term" value="C:extracellular region"/>
    <property type="evidence" value="ECO:0007669"/>
    <property type="project" value="UniProtKB-SubCell"/>
</dbReference>
<dbReference type="GO" id="GO:0031176">
    <property type="term" value="F:endo-1,4-beta-xylanase activity"/>
    <property type="evidence" value="ECO:0007669"/>
    <property type="project" value="UniProtKB-EC"/>
</dbReference>
<dbReference type="GO" id="GO:0045493">
    <property type="term" value="P:xylan catabolic process"/>
    <property type="evidence" value="ECO:0007669"/>
    <property type="project" value="UniProtKB-UniPathway"/>
</dbReference>
<dbReference type="FunFam" id="2.60.120.180:FF:000001">
    <property type="entry name" value="Endo-1,4-beta-xylanase"/>
    <property type="match status" value="1"/>
</dbReference>
<dbReference type="Gene3D" id="2.60.120.180">
    <property type="match status" value="1"/>
</dbReference>
<dbReference type="InterPro" id="IPR013320">
    <property type="entry name" value="ConA-like_dom_sf"/>
</dbReference>
<dbReference type="InterPro" id="IPR013319">
    <property type="entry name" value="GH11/12"/>
</dbReference>
<dbReference type="InterPro" id="IPR018208">
    <property type="entry name" value="GH11_AS_1"/>
</dbReference>
<dbReference type="InterPro" id="IPR033119">
    <property type="entry name" value="GH11_AS_2"/>
</dbReference>
<dbReference type="InterPro" id="IPR033123">
    <property type="entry name" value="GH11_dom"/>
</dbReference>
<dbReference type="InterPro" id="IPR001137">
    <property type="entry name" value="Glyco_hydro_11"/>
</dbReference>
<dbReference type="InterPro" id="IPR006311">
    <property type="entry name" value="TAT_signal"/>
</dbReference>
<dbReference type="InterPro" id="IPR019546">
    <property type="entry name" value="TAT_signal_bac_arc"/>
</dbReference>
<dbReference type="NCBIfam" id="TIGR01409">
    <property type="entry name" value="TAT_signal_seq"/>
    <property type="match status" value="1"/>
</dbReference>
<dbReference type="PANTHER" id="PTHR46828">
    <property type="entry name" value="ENDO-1,4-BETA-XYLANASE A-RELATED"/>
    <property type="match status" value="1"/>
</dbReference>
<dbReference type="PANTHER" id="PTHR46828:SF2">
    <property type="entry name" value="ENDO-1,4-BETA-XYLANASE A-RELATED"/>
    <property type="match status" value="1"/>
</dbReference>
<dbReference type="Pfam" id="PF00457">
    <property type="entry name" value="Glyco_hydro_11"/>
    <property type="match status" value="1"/>
</dbReference>
<dbReference type="PRINTS" id="PR00911">
    <property type="entry name" value="GLHYDRLASE11"/>
</dbReference>
<dbReference type="SUPFAM" id="SSF49899">
    <property type="entry name" value="Concanavalin A-like lectins/glucanases"/>
    <property type="match status" value="1"/>
</dbReference>
<dbReference type="PROSITE" id="PS00776">
    <property type="entry name" value="GH11_1"/>
    <property type="match status" value="1"/>
</dbReference>
<dbReference type="PROSITE" id="PS00777">
    <property type="entry name" value="GH11_2"/>
    <property type="match status" value="1"/>
</dbReference>
<dbReference type="PROSITE" id="PS51761">
    <property type="entry name" value="GH11_3"/>
    <property type="match status" value="1"/>
</dbReference>
<dbReference type="PROSITE" id="PS51318">
    <property type="entry name" value="TAT"/>
    <property type="match status" value="1"/>
</dbReference>
<reference key="1">
    <citation type="journal article" date="1991" name="Gene">
        <title>Sequences of three genes specifying xylanases in Streptomyces lividans.</title>
        <authorList>
            <person name="Shareck F."/>
            <person name="Roy C."/>
            <person name="Yaguchi M."/>
            <person name="Morosoli R."/>
            <person name="Kluepfel D."/>
        </authorList>
    </citation>
    <scope>NUCLEOTIDE SEQUENCE [GENOMIC DNA]</scope>
    <scope>PROTEIN SEQUENCE OF 50-80</scope>
    <source>
        <strain>66 / 1326</strain>
    </source>
</reference>
<reference key="2">
    <citation type="journal article" date="2004" name="Biochim. Biophys. Acta">
        <title>Secretion of active xylanase C from Streptomyces lividans is exclusively mediated by the Tat protein export system.</title>
        <authorList>
            <person name="Faury D."/>
            <person name="Saidane S."/>
            <person name="Li H."/>
            <person name="Morosoli R."/>
        </authorList>
    </citation>
    <scope>EXPORT VIA THE TAT-SYSTEM</scope>
    <scope>MUTAGENESIS OF ARG-23 AND ARG-24</scope>
</reference>
<organism>
    <name type="scientific">Streptomyces lividans</name>
    <dbReference type="NCBI Taxonomy" id="1916"/>
    <lineage>
        <taxon>Bacteria</taxon>
        <taxon>Bacillati</taxon>
        <taxon>Actinomycetota</taxon>
        <taxon>Actinomycetes</taxon>
        <taxon>Kitasatosporales</taxon>
        <taxon>Streptomycetaceae</taxon>
        <taxon>Streptomyces</taxon>
    </lineage>
</organism>
<comment type="function">
    <text>Contributes to hydrolyze hemicellulose, the major component of plant cell-walls.</text>
</comment>
<comment type="catalytic activity">
    <reaction>
        <text>Endohydrolysis of (1-&gt;4)-beta-D-xylosidic linkages in xylans.</text>
        <dbReference type="EC" id="3.2.1.8"/>
    </reaction>
</comment>
<comment type="pathway">
    <text>Glycan degradation; xylan degradation.</text>
</comment>
<comment type="subcellular location">
    <subcellularLocation>
        <location>Secreted</location>
    </subcellularLocation>
</comment>
<comment type="PTM">
    <text>Exported by the Tat system. The position of the signal peptide cleavage has been experimentally proven.</text>
</comment>
<comment type="miscellaneous">
    <text>Replacement of the wild-type signal peptide with a Sec-dependent signal peptide resulted in a mature product that was translocated but that lacked enzymatic activity. The lack of activity was probably due to an incorrect folding. No xylanase activity and no XlnC protein were detected in the supernatant of a tatC mutant.</text>
</comment>
<comment type="similarity">
    <text evidence="8">Belongs to the glycosyl hydrolase 11 (cellulase G) family.</text>
</comment>
<sequence>MQQDGTQQDRIKQSPAPLNGMSRRGFLGGAGTLALATASGLLLPGTAHAATTITTNQTGTDGMYYSFWTDGGGSVSMTLNGGGSYSTQWTNCGNFVAGKGWSTGDGNVRYNGYFNPVGNGYGCLYGWTSNPLVEYYIVDNWGSYRPTGTYKGTVSSDGGTYDIYQTTRYNAPSVEGTKTFQQYWSVRQSKVTSGSGTITTGNHFDAWARAGMNMGQFRYYMIMATEGYQSSGSSNITVSG</sequence>
<gene>
    <name type="primary">xlnC</name>
</gene>
<accession>P26220</accession>
<name>XYNC_STRLI</name>
<keyword id="KW-0119">Carbohydrate metabolism</keyword>
<keyword id="KW-0903">Direct protein sequencing</keyword>
<keyword id="KW-0326">Glycosidase</keyword>
<keyword id="KW-0378">Hydrolase</keyword>
<keyword id="KW-0624">Polysaccharide degradation</keyword>
<keyword id="KW-0964">Secreted</keyword>
<keyword id="KW-0732">Signal</keyword>
<keyword id="KW-0858">Xylan degradation</keyword>
<proteinExistence type="evidence at protein level"/>
<protein>
    <recommendedName>
        <fullName>Endo-1,4-beta-xylanase C</fullName>
        <shortName>Xylanase C</shortName>
        <ecNumber>3.2.1.8</ecNumber>
    </recommendedName>
    <alternativeName>
        <fullName>1,4-beta-D-xylan xylanohydrolase C</fullName>
    </alternativeName>
</protein>
<feature type="signal peptide" description="Tat-type signal" evidence="1 7">
    <location>
        <begin position="1"/>
        <end position="49"/>
    </location>
</feature>
<feature type="chain" id="PRO_0000008011" description="Endo-1,4-beta-xylanase C">
    <location>
        <begin position="50"/>
        <end position="240"/>
    </location>
</feature>
<feature type="domain" description="GH11" evidence="2">
    <location>
        <begin position="51"/>
        <end position="239"/>
    </location>
</feature>
<feature type="region of interest" description="Disordered" evidence="5">
    <location>
        <begin position="1"/>
        <end position="21"/>
    </location>
</feature>
<feature type="active site" description="Nucleophile" evidence="3">
    <location>
        <position position="134"/>
    </location>
</feature>
<feature type="active site" description="Proton donor" evidence="4">
    <location>
        <position position="226"/>
    </location>
</feature>
<feature type="mutagenesis site" description="4-fold reduction of XlnC production and severe impairment of precursor processing. 7-fold reduction of XlnC production and severe impairment of precursor processing; when associated with K-24." evidence="6">
    <original>R</original>
    <variation>K</variation>
    <location>
        <position position="23"/>
    </location>
</feature>
<feature type="mutagenesis site" description="7-fold reduction of XlnC production and severe impairment of precursor processing; when associated with K-23." evidence="6">
    <original>R</original>
    <variation>K</variation>
    <location>
        <position position="24"/>
    </location>
</feature>